<feature type="chain" id="PRO_1000201052" description="Phosphoglucosamine mutase">
    <location>
        <begin position="1"/>
        <end position="445"/>
    </location>
</feature>
<feature type="active site" description="Phosphoserine intermediate" evidence="1">
    <location>
        <position position="102"/>
    </location>
</feature>
<feature type="binding site" description="via phosphate group" evidence="1">
    <location>
        <position position="102"/>
    </location>
    <ligand>
        <name>Mg(2+)</name>
        <dbReference type="ChEBI" id="CHEBI:18420"/>
    </ligand>
</feature>
<feature type="binding site" evidence="1">
    <location>
        <position position="241"/>
    </location>
    <ligand>
        <name>Mg(2+)</name>
        <dbReference type="ChEBI" id="CHEBI:18420"/>
    </ligand>
</feature>
<feature type="binding site" evidence="1">
    <location>
        <position position="243"/>
    </location>
    <ligand>
        <name>Mg(2+)</name>
        <dbReference type="ChEBI" id="CHEBI:18420"/>
    </ligand>
</feature>
<feature type="binding site" evidence="1">
    <location>
        <position position="245"/>
    </location>
    <ligand>
        <name>Mg(2+)</name>
        <dbReference type="ChEBI" id="CHEBI:18420"/>
    </ligand>
</feature>
<feature type="modified residue" description="Phosphoserine" evidence="1">
    <location>
        <position position="102"/>
    </location>
</feature>
<proteinExistence type="inferred from homology"/>
<protein>
    <recommendedName>
        <fullName evidence="1">Phosphoglucosamine mutase</fullName>
        <ecNumber evidence="1">5.4.2.10</ecNumber>
    </recommendedName>
</protein>
<gene>
    <name evidence="1" type="primary">glmM</name>
    <name type="ordered locus">ABSDF3448</name>
</gene>
<reference key="1">
    <citation type="journal article" date="2008" name="PLoS ONE">
        <title>Comparative analysis of Acinetobacters: three genomes for three lifestyles.</title>
        <authorList>
            <person name="Vallenet D."/>
            <person name="Nordmann P."/>
            <person name="Barbe V."/>
            <person name="Poirel L."/>
            <person name="Mangenot S."/>
            <person name="Bataille E."/>
            <person name="Dossat C."/>
            <person name="Gas S."/>
            <person name="Kreimeyer A."/>
            <person name="Lenoble P."/>
            <person name="Oztas S."/>
            <person name="Poulain J."/>
            <person name="Segurens B."/>
            <person name="Robert C."/>
            <person name="Abergel C."/>
            <person name="Claverie J.-M."/>
            <person name="Raoult D."/>
            <person name="Medigue C."/>
            <person name="Weissenbach J."/>
            <person name="Cruveiller S."/>
        </authorList>
    </citation>
    <scope>NUCLEOTIDE SEQUENCE [LARGE SCALE GENOMIC DNA]</scope>
    <source>
        <strain>SDF</strain>
    </source>
</reference>
<sequence length="445" mass="48243">MSYFGTDGIRGKFGQMPITPEFALKLGFAAGKVLKRTSPKNKPLVVLGKDTRLSGYILESALQAGLNAAGVYVHLLGPLPTPAIAHLTRALHAHAGIVISASHNPYFDNGIKFFSSEGKKLPDSLQEEINKELEKDLFIEDTANLGKSVRVTDANGRYIEFCKSTFPYHFDLNNLKIVVDCAHGAAYSVGPSVFRELGAKVVALYNEPDGLNINENCGSTHPESLQKAVVEHGADLGIAFDGDADRVVMVDKFGNLIDGDHILYILATQAKNKPAGVVGTVMSNMALEVALEKANVGFVRAKVGDRYVLQALEENGWVTGGEPSGHILTLDKSTTGDAIIAALQVLTVMVEQNKALHELVHDFKLYPQVLVNVRLEQMLDPYSIPALVAEFNKAEEQLKGRGRILIRKSGTEPVIRVMVEGDNEQEVKTLAEHLANAVRSQAQVA</sequence>
<name>GLMM_ACIBS</name>
<dbReference type="EC" id="5.4.2.10" evidence="1"/>
<dbReference type="EMBL" id="CU468230">
    <property type="protein sequence ID" value="CAP02715.1"/>
    <property type="molecule type" value="Genomic_DNA"/>
</dbReference>
<dbReference type="SMR" id="B0VNX9"/>
<dbReference type="KEGG" id="abm:ABSDF3448"/>
<dbReference type="HOGENOM" id="CLU_016950_7_0_6"/>
<dbReference type="Proteomes" id="UP000001741">
    <property type="component" value="Chromosome"/>
</dbReference>
<dbReference type="GO" id="GO:0005829">
    <property type="term" value="C:cytosol"/>
    <property type="evidence" value="ECO:0007669"/>
    <property type="project" value="TreeGrafter"/>
</dbReference>
<dbReference type="GO" id="GO:0000287">
    <property type="term" value="F:magnesium ion binding"/>
    <property type="evidence" value="ECO:0007669"/>
    <property type="project" value="UniProtKB-UniRule"/>
</dbReference>
<dbReference type="GO" id="GO:0008966">
    <property type="term" value="F:phosphoglucosamine mutase activity"/>
    <property type="evidence" value="ECO:0007669"/>
    <property type="project" value="UniProtKB-UniRule"/>
</dbReference>
<dbReference type="GO" id="GO:0004615">
    <property type="term" value="F:phosphomannomutase activity"/>
    <property type="evidence" value="ECO:0007669"/>
    <property type="project" value="TreeGrafter"/>
</dbReference>
<dbReference type="GO" id="GO:0005975">
    <property type="term" value="P:carbohydrate metabolic process"/>
    <property type="evidence" value="ECO:0007669"/>
    <property type="project" value="InterPro"/>
</dbReference>
<dbReference type="GO" id="GO:0009252">
    <property type="term" value="P:peptidoglycan biosynthetic process"/>
    <property type="evidence" value="ECO:0007669"/>
    <property type="project" value="TreeGrafter"/>
</dbReference>
<dbReference type="GO" id="GO:0006048">
    <property type="term" value="P:UDP-N-acetylglucosamine biosynthetic process"/>
    <property type="evidence" value="ECO:0007669"/>
    <property type="project" value="TreeGrafter"/>
</dbReference>
<dbReference type="CDD" id="cd05802">
    <property type="entry name" value="GlmM"/>
    <property type="match status" value="1"/>
</dbReference>
<dbReference type="FunFam" id="3.30.310.50:FF:000001">
    <property type="entry name" value="Phosphoglucosamine mutase"/>
    <property type="match status" value="1"/>
</dbReference>
<dbReference type="FunFam" id="3.40.120.10:FF:000001">
    <property type="entry name" value="Phosphoglucosamine mutase"/>
    <property type="match status" value="1"/>
</dbReference>
<dbReference type="FunFam" id="3.40.120.10:FF:000003">
    <property type="entry name" value="Phosphoglucosamine mutase"/>
    <property type="match status" value="1"/>
</dbReference>
<dbReference type="Gene3D" id="3.40.120.10">
    <property type="entry name" value="Alpha-D-Glucose-1,6-Bisphosphate, subunit A, domain 3"/>
    <property type="match status" value="3"/>
</dbReference>
<dbReference type="Gene3D" id="3.30.310.50">
    <property type="entry name" value="Alpha-D-phosphohexomutase, C-terminal domain"/>
    <property type="match status" value="1"/>
</dbReference>
<dbReference type="HAMAP" id="MF_01554_B">
    <property type="entry name" value="GlmM_B"/>
    <property type="match status" value="1"/>
</dbReference>
<dbReference type="InterPro" id="IPR005844">
    <property type="entry name" value="A-D-PHexomutase_a/b/a-I"/>
</dbReference>
<dbReference type="InterPro" id="IPR016055">
    <property type="entry name" value="A-D-PHexomutase_a/b/a-I/II/III"/>
</dbReference>
<dbReference type="InterPro" id="IPR005845">
    <property type="entry name" value="A-D-PHexomutase_a/b/a-II"/>
</dbReference>
<dbReference type="InterPro" id="IPR005846">
    <property type="entry name" value="A-D-PHexomutase_a/b/a-III"/>
</dbReference>
<dbReference type="InterPro" id="IPR005843">
    <property type="entry name" value="A-D-PHexomutase_C"/>
</dbReference>
<dbReference type="InterPro" id="IPR036900">
    <property type="entry name" value="A-D-PHexomutase_C_sf"/>
</dbReference>
<dbReference type="InterPro" id="IPR016066">
    <property type="entry name" value="A-D-PHexomutase_CS"/>
</dbReference>
<dbReference type="InterPro" id="IPR005841">
    <property type="entry name" value="Alpha-D-phosphohexomutase_SF"/>
</dbReference>
<dbReference type="InterPro" id="IPR006352">
    <property type="entry name" value="GlmM_bact"/>
</dbReference>
<dbReference type="InterPro" id="IPR050060">
    <property type="entry name" value="Phosphoglucosamine_mutase"/>
</dbReference>
<dbReference type="NCBIfam" id="TIGR01455">
    <property type="entry name" value="glmM"/>
    <property type="match status" value="1"/>
</dbReference>
<dbReference type="NCBIfam" id="NF008139">
    <property type="entry name" value="PRK10887.1"/>
    <property type="match status" value="1"/>
</dbReference>
<dbReference type="PANTHER" id="PTHR42946:SF1">
    <property type="entry name" value="PHOSPHOGLUCOMUTASE (ALPHA-D-GLUCOSE-1,6-BISPHOSPHATE-DEPENDENT)"/>
    <property type="match status" value="1"/>
</dbReference>
<dbReference type="PANTHER" id="PTHR42946">
    <property type="entry name" value="PHOSPHOHEXOSE MUTASE"/>
    <property type="match status" value="1"/>
</dbReference>
<dbReference type="Pfam" id="PF02878">
    <property type="entry name" value="PGM_PMM_I"/>
    <property type="match status" value="1"/>
</dbReference>
<dbReference type="Pfam" id="PF02879">
    <property type="entry name" value="PGM_PMM_II"/>
    <property type="match status" value="1"/>
</dbReference>
<dbReference type="Pfam" id="PF02880">
    <property type="entry name" value="PGM_PMM_III"/>
    <property type="match status" value="1"/>
</dbReference>
<dbReference type="Pfam" id="PF00408">
    <property type="entry name" value="PGM_PMM_IV"/>
    <property type="match status" value="1"/>
</dbReference>
<dbReference type="PRINTS" id="PR00509">
    <property type="entry name" value="PGMPMM"/>
</dbReference>
<dbReference type="SUPFAM" id="SSF55957">
    <property type="entry name" value="Phosphoglucomutase, C-terminal domain"/>
    <property type="match status" value="1"/>
</dbReference>
<dbReference type="SUPFAM" id="SSF53738">
    <property type="entry name" value="Phosphoglucomutase, first 3 domains"/>
    <property type="match status" value="3"/>
</dbReference>
<dbReference type="PROSITE" id="PS00710">
    <property type="entry name" value="PGM_PMM"/>
    <property type="match status" value="1"/>
</dbReference>
<evidence type="ECO:0000255" key="1">
    <source>
        <dbReference type="HAMAP-Rule" id="MF_01554"/>
    </source>
</evidence>
<comment type="function">
    <text evidence="1">Catalyzes the conversion of glucosamine-6-phosphate to glucosamine-1-phosphate.</text>
</comment>
<comment type="catalytic activity">
    <reaction evidence="1">
        <text>alpha-D-glucosamine 1-phosphate = D-glucosamine 6-phosphate</text>
        <dbReference type="Rhea" id="RHEA:23424"/>
        <dbReference type="ChEBI" id="CHEBI:58516"/>
        <dbReference type="ChEBI" id="CHEBI:58725"/>
        <dbReference type="EC" id="5.4.2.10"/>
    </reaction>
</comment>
<comment type="cofactor">
    <cofactor evidence="1">
        <name>Mg(2+)</name>
        <dbReference type="ChEBI" id="CHEBI:18420"/>
    </cofactor>
    <text evidence="1">Binds 1 Mg(2+) ion per subunit.</text>
</comment>
<comment type="PTM">
    <text evidence="1">Activated by phosphorylation.</text>
</comment>
<comment type="similarity">
    <text evidence="1">Belongs to the phosphohexose mutase family.</text>
</comment>
<keyword id="KW-0413">Isomerase</keyword>
<keyword id="KW-0460">Magnesium</keyword>
<keyword id="KW-0479">Metal-binding</keyword>
<keyword id="KW-0597">Phosphoprotein</keyword>
<accession>B0VNX9</accession>
<organism>
    <name type="scientific">Acinetobacter baumannii (strain SDF)</name>
    <dbReference type="NCBI Taxonomy" id="509170"/>
    <lineage>
        <taxon>Bacteria</taxon>
        <taxon>Pseudomonadati</taxon>
        <taxon>Pseudomonadota</taxon>
        <taxon>Gammaproteobacteria</taxon>
        <taxon>Moraxellales</taxon>
        <taxon>Moraxellaceae</taxon>
        <taxon>Acinetobacter</taxon>
        <taxon>Acinetobacter calcoaceticus/baumannii complex</taxon>
    </lineage>
</organism>